<feature type="chain" id="PRO_1000062458" description="Protein-export protein SecB">
    <location>
        <begin position="1"/>
        <end position="164"/>
    </location>
</feature>
<organism>
    <name type="scientific">Burkholderia cenocepacia (strain HI2424)</name>
    <dbReference type="NCBI Taxonomy" id="331272"/>
    <lineage>
        <taxon>Bacteria</taxon>
        <taxon>Pseudomonadati</taxon>
        <taxon>Pseudomonadota</taxon>
        <taxon>Betaproteobacteria</taxon>
        <taxon>Burkholderiales</taxon>
        <taxon>Burkholderiaceae</taxon>
        <taxon>Burkholderia</taxon>
        <taxon>Burkholderia cepacia complex</taxon>
    </lineage>
</organism>
<sequence>MSDVENQPFFNIQRVYLKDMSLEQPNSPAIFLEQDMPSVEVEVDVKADRLAESVFEVVVSGTVTAKVKDKVAFLIEAKQAGIFDIRNIPDEQLDPLVGIACPTILFPYLRSNIADAITRAGFPPIHLAEINFQALYEQRLAQLQQQAGAAAGAPNGAPNGTTLN</sequence>
<proteinExistence type="inferred from homology"/>
<comment type="function">
    <text evidence="1">One of the proteins required for the normal export of preproteins out of the cell cytoplasm. It is a molecular chaperone that binds to a subset of precursor proteins, maintaining them in a translocation-competent state. It also specifically binds to its receptor SecA.</text>
</comment>
<comment type="subunit">
    <text evidence="1">Homotetramer, a dimer of dimers. One homotetramer interacts with 1 SecA dimer.</text>
</comment>
<comment type="subcellular location">
    <subcellularLocation>
        <location evidence="1">Cytoplasm</location>
    </subcellularLocation>
</comment>
<comment type="similarity">
    <text evidence="1">Belongs to the SecB family.</text>
</comment>
<protein>
    <recommendedName>
        <fullName evidence="1">Protein-export protein SecB</fullName>
    </recommendedName>
</protein>
<gene>
    <name evidence="1" type="primary">secB</name>
    <name type="ordered locus">Bcen2424_2854</name>
</gene>
<name>SECB_BURCH</name>
<dbReference type="EMBL" id="CP000458">
    <property type="protein sequence ID" value="ABK09604.1"/>
    <property type="molecule type" value="Genomic_DNA"/>
</dbReference>
<dbReference type="RefSeq" id="WP_006477723.1">
    <property type="nucleotide sequence ID" value="NC_008542.1"/>
</dbReference>
<dbReference type="SMR" id="A0KAS7"/>
<dbReference type="GeneID" id="83049648"/>
<dbReference type="KEGG" id="bch:Bcen2424_2854"/>
<dbReference type="HOGENOM" id="CLU_111574_1_0_4"/>
<dbReference type="GO" id="GO:0005737">
    <property type="term" value="C:cytoplasm"/>
    <property type="evidence" value="ECO:0007669"/>
    <property type="project" value="UniProtKB-SubCell"/>
</dbReference>
<dbReference type="GO" id="GO:0051082">
    <property type="term" value="F:unfolded protein binding"/>
    <property type="evidence" value="ECO:0007669"/>
    <property type="project" value="InterPro"/>
</dbReference>
<dbReference type="GO" id="GO:0006457">
    <property type="term" value="P:protein folding"/>
    <property type="evidence" value="ECO:0007669"/>
    <property type="project" value="UniProtKB-UniRule"/>
</dbReference>
<dbReference type="GO" id="GO:0051262">
    <property type="term" value="P:protein tetramerization"/>
    <property type="evidence" value="ECO:0007669"/>
    <property type="project" value="InterPro"/>
</dbReference>
<dbReference type="GO" id="GO:0015031">
    <property type="term" value="P:protein transport"/>
    <property type="evidence" value="ECO:0007669"/>
    <property type="project" value="UniProtKB-UniRule"/>
</dbReference>
<dbReference type="Gene3D" id="3.10.420.10">
    <property type="entry name" value="SecB-like"/>
    <property type="match status" value="1"/>
</dbReference>
<dbReference type="HAMAP" id="MF_00821">
    <property type="entry name" value="SecB"/>
    <property type="match status" value="1"/>
</dbReference>
<dbReference type="InterPro" id="IPR003708">
    <property type="entry name" value="SecB"/>
</dbReference>
<dbReference type="InterPro" id="IPR035958">
    <property type="entry name" value="SecB-like_sf"/>
</dbReference>
<dbReference type="NCBIfam" id="NF004392">
    <property type="entry name" value="PRK05751.1-3"/>
    <property type="match status" value="1"/>
</dbReference>
<dbReference type="NCBIfam" id="NF004394">
    <property type="entry name" value="PRK05751.1-5"/>
    <property type="match status" value="1"/>
</dbReference>
<dbReference type="NCBIfam" id="TIGR00809">
    <property type="entry name" value="secB"/>
    <property type="match status" value="1"/>
</dbReference>
<dbReference type="PANTHER" id="PTHR36918">
    <property type="match status" value="1"/>
</dbReference>
<dbReference type="PANTHER" id="PTHR36918:SF1">
    <property type="entry name" value="PROTEIN-EXPORT PROTEIN SECB"/>
    <property type="match status" value="1"/>
</dbReference>
<dbReference type="Pfam" id="PF02556">
    <property type="entry name" value="SecB"/>
    <property type="match status" value="1"/>
</dbReference>
<dbReference type="PRINTS" id="PR01594">
    <property type="entry name" value="SECBCHAPRONE"/>
</dbReference>
<dbReference type="SUPFAM" id="SSF54611">
    <property type="entry name" value="SecB-like"/>
    <property type="match status" value="1"/>
</dbReference>
<evidence type="ECO:0000255" key="1">
    <source>
        <dbReference type="HAMAP-Rule" id="MF_00821"/>
    </source>
</evidence>
<accession>A0KAS7</accession>
<keyword id="KW-0143">Chaperone</keyword>
<keyword id="KW-0963">Cytoplasm</keyword>
<keyword id="KW-0653">Protein transport</keyword>
<keyword id="KW-0811">Translocation</keyword>
<keyword id="KW-0813">Transport</keyword>
<reference key="1">
    <citation type="submission" date="2006-08" db="EMBL/GenBank/DDBJ databases">
        <title>Complete sequence of chromosome 1 of Burkholderia cenocepacia HI2424.</title>
        <authorList>
            <person name="Copeland A."/>
            <person name="Lucas S."/>
            <person name="Lapidus A."/>
            <person name="Barry K."/>
            <person name="Detter J.C."/>
            <person name="Glavina del Rio T."/>
            <person name="Hammon N."/>
            <person name="Israni S."/>
            <person name="Pitluck S."/>
            <person name="Chain P."/>
            <person name="Malfatti S."/>
            <person name="Shin M."/>
            <person name="Vergez L."/>
            <person name="Schmutz J."/>
            <person name="Larimer F."/>
            <person name="Land M."/>
            <person name="Hauser L."/>
            <person name="Kyrpides N."/>
            <person name="Kim E."/>
            <person name="LiPuma J.J."/>
            <person name="Gonzalez C.F."/>
            <person name="Konstantinidis K."/>
            <person name="Tiedje J.M."/>
            <person name="Richardson P."/>
        </authorList>
    </citation>
    <scope>NUCLEOTIDE SEQUENCE [LARGE SCALE GENOMIC DNA]</scope>
    <source>
        <strain>HI2424</strain>
    </source>
</reference>